<comment type="function">
    <text evidence="2">With S4 and S5 plays an important role in translational accuracy.</text>
</comment>
<comment type="function">
    <text evidence="2">Interacts with and stabilizes bases of the 16S rRNA that are involved in tRNA selection in the A site and with the mRNA backbone. Located at the interface of the 30S and 50S subunits, it traverses the body of the 30S subunit contacting proteins on the other side and probably holding the rRNA structure together. The combined cluster of proteins S8, S12 and S17 appears to hold together the shoulder and platform of the 30S subunit.</text>
</comment>
<comment type="subunit">
    <text evidence="2">Part of the 30S ribosomal subunit. Contacts proteins S8 and S17. May interact with IF1 in the 30S initiation complex.</text>
</comment>
<comment type="similarity">
    <text evidence="2">Belongs to the universal ribosomal protein uS12 family.</text>
</comment>
<name>RS12_SHEPC</name>
<feature type="chain" id="PRO_1000049811" description="Small ribosomal subunit protein uS12">
    <location>
        <begin position="1"/>
        <end position="124"/>
    </location>
</feature>
<feature type="modified residue" description="3-methylthioaspartic acid" evidence="1">
    <location>
        <position position="89"/>
    </location>
</feature>
<proteinExistence type="inferred from homology"/>
<dbReference type="EMBL" id="CP000681">
    <property type="protein sequence ID" value="ABP77471.1"/>
    <property type="molecule type" value="Genomic_DNA"/>
</dbReference>
<dbReference type="SMR" id="A4YBY8"/>
<dbReference type="STRING" id="319224.Sputcn32_3764"/>
<dbReference type="KEGG" id="spc:Sputcn32_3764"/>
<dbReference type="eggNOG" id="COG0048">
    <property type="taxonomic scope" value="Bacteria"/>
</dbReference>
<dbReference type="HOGENOM" id="CLU_104295_1_2_6"/>
<dbReference type="GO" id="GO:0015935">
    <property type="term" value="C:small ribosomal subunit"/>
    <property type="evidence" value="ECO:0007669"/>
    <property type="project" value="InterPro"/>
</dbReference>
<dbReference type="GO" id="GO:0019843">
    <property type="term" value="F:rRNA binding"/>
    <property type="evidence" value="ECO:0007669"/>
    <property type="project" value="UniProtKB-UniRule"/>
</dbReference>
<dbReference type="GO" id="GO:0003735">
    <property type="term" value="F:structural constituent of ribosome"/>
    <property type="evidence" value="ECO:0007669"/>
    <property type="project" value="InterPro"/>
</dbReference>
<dbReference type="GO" id="GO:0000049">
    <property type="term" value="F:tRNA binding"/>
    <property type="evidence" value="ECO:0007669"/>
    <property type="project" value="UniProtKB-UniRule"/>
</dbReference>
<dbReference type="GO" id="GO:0006412">
    <property type="term" value="P:translation"/>
    <property type="evidence" value="ECO:0007669"/>
    <property type="project" value="UniProtKB-UniRule"/>
</dbReference>
<dbReference type="CDD" id="cd03368">
    <property type="entry name" value="Ribosomal_S12"/>
    <property type="match status" value="1"/>
</dbReference>
<dbReference type="FunFam" id="2.40.50.140:FF:000001">
    <property type="entry name" value="30S ribosomal protein S12"/>
    <property type="match status" value="1"/>
</dbReference>
<dbReference type="Gene3D" id="2.40.50.140">
    <property type="entry name" value="Nucleic acid-binding proteins"/>
    <property type="match status" value="1"/>
</dbReference>
<dbReference type="HAMAP" id="MF_00403_B">
    <property type="entry name" value="Ribosomal_uS12_B"/>
    <property type="match status" value="1"/>
</dbReference>
<dbReference type="InterPro" id="IPR012340">
    <property type="entry name" value="NA-bd_OB-fold"/>
</dbReference>
<dbReference type="InterPro" id="IPR006032">
    <property type="entry name" value="Ribosomal_uS12"/>
</dbReference>
<dbReference type="InterPro" id="IPR005679">
    <property type="entry name" value="Ribosomal_uS12_bac"/>
</dbReference>
<dbReference type="NCBIfam" id="TIGR00981">
    <property type="entry name" value="rpsL_bact"/>
    <property type="match status" value="1"/>
</dbReference>
<dbReference type="PANTHER" id="PTHR11652">
    <property type="entry name" value="30S RIBOSOMAL PROTEIN S12 FAMILY MEMBER"/>
    <property type="match status" value="1"/>
</dbReference>
<dbReference type="Pfam" id="PF00164">
    <property type="entry name" value="Ribosom_S12_S23"/>
    <property type="match status" value="1"/>
</dbReference>
<dbReference type="PIRSF" id="PIRSF002133">
    <property type="entry name" value="Ribosomal_S12/S23"/>
    <property type="match status" value="1"/>
</dbReference>
<dbReference type="PRINTS" id="PR01034">
    <property type="entry name" value="RIBOSOMALS12"/>
</dbReference>
<dbReference type="SUPFAM" id="SSF50249">
    <property type="entry name" value="Nucleic acid-binding proteins"/>
    <property type="match status" value="1"/>
</dbReference>
<dbReference type="PROSITE" id="PS00055">
    <property type="entry name" value="RIBOSOMAL_S12"/>
    <property type="match status" value="1"/>
</dbReference>
<gene>
    <name evidence="2" type="primary">rpsL</name>
    <name type="ordered locus">Sputcn32_3764</name>
</gene>
<sequence>MATVNQLVRKPRAPKVDKTNVPALNACPQKRGVCTRVYTTTPKKPNSALRKVARVRLTNGFEVTSYIGGEGHNLQEHSVILIRGGRVKDLPGVRYHTVRGALDCAGVSSRRQGRSKYGAKRPKS</sequence>
<keyword id="KW-0488">Methylation</keyword>
<keyword id="KW-0687">Ribonucleoprotein</keyword>
<keyword id="KW-0689">Ribosomal protein</keyword>
<keyword id="KW-0694">RNA-binding</keyword>
<keyword id="KW-0699">rRNA-binding</keyword>
<keyword id="KW-0820">tRNA-binding</keyword>
<evidence type="ECO:0000250" key="1"/>
<evidence type="ECO:0000255" key="2">
    <source>
        <dbReference type="HAMAP-Rule" id="MF_00403"/>
    </source>
</evidence>
<evidence type="ECO:0000305" key="3"/>
<accession>A4YBY8</accession>
<protein>
    <recommendedName>
        <fullName evidence="2">Small ribosomal subunit protein uS12</fullName>
    </recommendedName>
    <alternativeName>
        <fullName evidence="3">30S ribosomal protein S12</fullName>
    </alternativeName>
</protein>
<reference key="1">
    <citation type="submission" date="2007-04" db="EMBL/GenBank/DDBJ databases">
        <title>Complete sequence of Shewanella putrefaciens CN-32.</title>
        <authorList>
            <consortium name="US DOE Joint Genome Institute"/>
            <person name="Copeland A."/>
            <person name="Lucas S."/>
            <person name="Lapidus A."/>
            <person name="Barry K."/>
            <person name="Detter J.C."/>
            <person name="Glavina del Rio T."/>
            <person name="Hammon N."/>
            <person name="Israni S."/>
            <person name="Dalin E."/>
            <person name="Tice H."/>
            <person name="Pitluck S."/>
            <person name="Chain P."/>
            <person name="Malfatti S."/>
            <person name="Shin M."/>
            <person name="Vergez L."/>
            <person name="Schmutz J."/>
            <person name="Larimer F."/>
            <person name="Land M."/>
            <person name="Hauser L."/>
            <person name="Kyrpides N."/>
            <person name="Mikhailova N."/>
            <person name="Romine M.F."/>
            <person name="Fredrickson J."/>
            <person name="Tiedje J."/>
            <person name="Richardson P."/>
        </authorList>
    </citation>
    <scope>NUCLEOTIDE SEQUENCE [LARGE SCALE GENOMIC DNA]</scope>
    <source>
        <strain>CN-32 / ATCC BAA-453</strain>
    </source>
</reference>
<organism>
    <name type="scientific">Shewanella putrefaciens (strain CN-32 / ATCC BAA-453)</name>
    <dbReference type="NCBI Taxonomy" id="319224"/>
    <lineage>
        <taxon>Bacteria</taxon>
        <taxon>Pseudomonadati</taxon>
        <taxon>Pseudomonadota</taxon>
        <taxon>Gammaproteobacteria</taxon>
        <taxon>Alteromonadales</taxon>
        <taxon>Shewanellaceae</taxon>
        <taxon>Shewanella</taxon>
    </lineage>
</organism>